<sequence>MKANTKSKKVNKAWLHDHVNDTYVKLAQKEGYRARAAYKLKEIDETLGLIRPGQVVVDLGSAPGAWSQYLRRRMAPAGAAAGQLNGTLIALDILPMEPIEGVTFLQGDFREEDVLARLQEAVQARPVDVVVSDMAPNLSGVESVDAVRIAHLIELAVDFAQQHLKPDGALVVKLFHGSGYAQLVQLFKEHFRTVKPMKPKASRDKSSETFLVGMGLRK</sequence>
<protein>
    <recommendedName>
        <fullName evidence="1">Ribosomal RNA large subunit methyltransferase E</fullName>
        <ecNumber evidence="1">2.1.1.166</ecNumber>
    </recommendedName>
    <alternativeName>
        <fullName evidence="1">23S rRNA Um2552 methyltransferase</fullName>
    </alternativeName>
    <alternativeName>
        <fullName evidence="1">rRNA (uridine-2'-O-)-methyltransferase</fullName>
    </alternativeName>
</protein>
<gene>
    <name evidence="1" type="primary">rlmE</name>
    <name evidence="1" type="synonym">ftsJ</name>
    <name evidence="1" type="synonym">rrmJ</name>
    <name type="ordered locus">Aave_2616</name>
</gene>
<comment type="function">
    <text evidence="1">Specifically methylates the uridine in position 2552 of 23S rRNA at the 2'-O position of the ribose in the fully assembled 50S ribosomal subunit.</text>
</comment>
<comment type="catalytic activity">
    <reaction evidence="1">
        <text>uridine(2552) in 23S rRNA + S-adenosyl-L-methionine = 2'-O-methyluridine(2552) in 23S rRNA + S-adenosyl-L-homocysteine + H(+)</text>
        <dbReference type="Rhea" id="RHEA:42720"/>
        <dbReference type="Rhea" id="RHEA-COMP:10202"/>
        <dbReference type="Rhea" id="RHEA-COMP:10203"/>
        <dbReference type="ChEBI" id="CHEBI:15378"/>
        <dbReference type="ChEBI" id="CHEBI:57856"/>
        <dbReference type="ChEBI" id="CHEBI:59789"/>
        <dbReference type="ChEBI" id="CHEBI:65315"/>
        <dbReference type="ChEBI" id="CHEBI:74478"/>
        <dbReference type="EC" id="2.1.1.166"/>
    </reaction>
</comment>
<comment type="subcellular location">
    <subcellularLocation>
        <location evidence="1">Cytoplasm</location>
    </subcellularLocation>
</comment>
<comment type="similarity">
    <text evidence="1">Belongs to the class I-like SAM-binding methyltransferase superfamily. RNA methyltransferase RlmE family.</text>
</comment>
<evidence type="ECO:0000255" key="1">
    <source>
        <dbReference type="HAMAP-Rule" id="MF_01547"/>
    </source>
</evidence>
<reference key="1">
    <citation type="submission" date="2006-12" db="EMBL/GenBank/DDBJ databases">
        <title>Complete sequence of Acidovorax avenae subsp. citrulli AAC00-1.</title>
        <authorList>
            <person name="Copeland A."/>
            <person name="Lucas S."/>
            <person name="Lapidus A."/>
            <person name="Barry K."/>
            <person name="Detter J.C."/>
            <person name="Glavina del Rio T."/>
            <person name="Dalin E."/>
            <person name="Tice H."/>
            <person name="Pitluck S."/>
            <person name="Kiss H."/>
            <person name="Brettin T."/>
            <person name="Bruce D."/>
            <person name="Han C."/>
            <person name="Tapia R."/>
            <person name="Gilna P."/>
            <person name="Schmutz J."/>
            <person name="Larimer F."/>
            <person name="Land M."/>
            <person name="Hauser L."/>
            <person name="Kyrpides N."/>
            <person name="Kim E."/>
            <person name="Stahl D."/>
            <person name="Richardson P."/>
        </authorList>
    </citation>
    <scope>NUCLEOTIDE SEQUENCE [LARGE SCALE GENOMIC DNA]</scope>
    <source>
        <strain>AAC00-1</strain>
    </source>
</reference>
<organism>
    <name type="scientific">Paracidovorax citrulli (strain AAC00-1)</name>
    <name type="common">Acidovorax citrulli</name>
    <dbReference type="NCBI Taxonomy" id="397945"/>
    <lineage>
        <taxon>Bacteria</taxon>
        <taxon>Pseudomonadati</taxon>
        <taxon>Pseudomonadota</taxon>
        <taxon>Betaproteobacteria</taxon>
        <taxon>Burkholderiales</taxon>
        <taxon>Comamonadaceae</taxon>
        <taxon>Paracidovorax</taxon>
    </lineage>
</organism>
<dbReference type="EC" id="2.1.1.166" evidence="1"/>
<dbReference type="EMBL" id="CP000512">
    <property type="protein sequence ID" value="ABM33188.1"/>
    <property type="molecule type" value="Genomic_DNA"/>
</dbReference>
<dbReference type="RefSeq" id="WP_011795712.1">
    <property type="nucleotide sequence ID" value="NC_008752.1"/>
</dbReference>
<dbReference type="SMR" id="A1TQF0"/>
<dbReference type="STRING" id="397945.Aave_2616"/>
<dbReference type="GeneID" id="79792202"/>
<dbReference type="KEGG" id="aav:Aave_2616"/>
<dbReference type="eggNOG" id="COG0293">
    <property type="taxonomic scope" value="Bacteria"/>
</dbReference>
<dbReference type="HOGENOM" id="CLU_009422_4_1_4"/>
<dbReference type="OrthoDB" id="9790080at2"/>
<dbReference type="Proteomes" id="UP000002596">
    <property type="component" value="Chromosome"/>
</dbReference>
<dbReference type="GO" id="GO:0005737">
    <property type="term" value="C:cytoplasm"/>
    <property type="evidence" value="ECO:0007669"/>
    <property type="project" value="UniProtKB-SubCell"/>
</dbReference>
<dbReference type="GO" id="GO:0008650">
    <property type="term" value="F:rRNA (uridine-2'-O-)-methyltransferase activity"/>
    <property type="evidence" value="ECO:0007669"/>
    <property type="project" value="UniProtKB-UniRule"/>
</dbReference>
<dbReference type="FunFam" id="3.40.50.150:FF:000005">
    <property type="entry name" value="Ribosomal RNA large subunit methyltransferase E"/>
    <property type="match status" value="1"/>
</dbReference>
<dbReference type="Gene3D" id="3.40.50.150">
    <property type="entry name" value="Vaccinia Virus protein VP39"/>
    <property type="match status" value="1"/>
</dbReference>
<dbReference type="HAMAP" id="MF_01547">
    <property type="entry name" value="RNA_methyltr_E"/>
    <property type="match status" value="1"/>
</dbReference>
<dbReference type="InterPro" id="IPR050082">
    <property type="entry name" value="RNA_methyltr_RlmE"/>
</dbReference>
<dbReference type="InterPro" id="IPR002877">
    <property type="entry name" value="RNA_MeTrfase_FtsJ_dom"/>
</dbReference>
<dbReference type="InterPro" id="IPR015507">
    <property type="entry name" value="rRNA-MeTfrase_E"/>
</dbReference>
<dbReference type="InterPro" id="IPR029063">
    <property type="entry name" value="SAM-dependent_MTases_sf"/>
</dbReference>
<dbReference type="PANTHER" id="PTHR10920">
    <property type="entry name" value="RIBOSOMAL RNA METHYLTRANSFERASE"/>
    <property type="match status" value="1"/>
</dbReference>
<dbReference type="PANTHER" id="PTHR10920:SF18">
    <property type="entry name" value="RRNA METHYLTRANSFERASE 2, MITOCHONDRIAL"/>
    <property type="match status" value="1"/>
</dbReference>
<dbReference type="Pfam" id="PF01728">
    <property type="entry name" value="FtsJ"/>
    <property type="match status" value="1"/>
</dbReference>
<dbReference type="PIRSF" id="PIRSF005461">
    <property type="entry name" value="23S_rRNA_mtase"/>
    <property type="match status" value="1"/>
</dbReference>
<dbReference type="SUPFAM" id="SSF53335">
    <property type="entry name" value="S-adenosyl-L-methionine-dependent methyltransferases"/>
    <property type="match status" value="1"/>
</dbReference>
<accession>A1TQF0</accession>
<feature type="chain" id="PRO_0000282718" description="Ribosomal RNA large subunit methyltransferase E">
    <location>
        <begin position="1"/>
        <end position="218"/>
    </location>
</feature>
<feature type="active site" description="Proton acceptor" evidence="1">
    <location>
        <position position="173"/>
    </location>
</feature>
<feature type="binding site" evidence="1">
    <location>
        <position position="64"/>
    </location>
    <ligand>
        <name>S-adenosyl-L-methionine</name>
        <dbReference type="ChEBI" id="CHEBI:59789"/>
    </ligand>
</feature>
<feature type="binding site" evidence="1">
    <location>
        <position position="66"/>
    </location>
    <ligand>
        <name>S-adenosyl-L-methionine</name>
        <dbReference type="ChEBI" id="CHEBI:59789"/>
    </ligand>
</feature>
<feature type="binding site" evidence="1">
    <location>
        <position position="92"/>
    </location>
    <ligand>
        <name>S-adenosyl-L-methionine</name>
        <dbReference type="ChEBI" id="CHEBI:59789"/>
    </ligand>
</feature>
<feature type="binding site" evidence="1">
    <location>
        <position position="108"/>
    </location>
    <ligand>
        <name>S-adenosyl-L-methionine</name>
        <dbReference type="ChEBI" id="CHEBI:59789"/>
    </ligand>
</feature>
<feature type="binding site" evidence="1">
    <location>
        <position position="133"/>
    </location>
    <ligand>
        <name>S-adenosyl-L-methionine</name>
        <dbReference type="ChEBI" id="CHEBI:59789"/>
    </ligand>
</feature>
<name>RLME_PARC0</name>
<keyword id="KW-0963">Cytoplasm</keyword>
<keyword id="KW-0489">Methyltransferase</keyword>
<keyword id="KW-0698">rRNA processing</keyword>
<keyword id="KW-0949">S-adenosyl-L-methionine</keyword>
<keyword id="KW-0808">Transferase</keyword>
<proteinExistence type="inferred from homology"/>